<evidence type="ECO:0000255" key="1">
    <source>
        <dbReference type="HAMAP-Rule" id="MF_01903"/>
    </source>
</evidence>
<feature type="chain" id="PRO_1000188766" description="Xanthine-guanine phosphoribosyltransferase">
    <location>
        <begin position="1"/>
        <end position="152"/>
    </location>
</feature>
<feature type="binding site" evidence="1">
    <location>
        <begin position="37"/>
        <end position="38"/>
    </location>
    <ligand>
        <name>5-phospho-alpha-D-ribose 1-diphosphate</name>
        <dbReference type="ChEBI" id="CHEBI:58017"/>
    </ligand>
</feature>
<feature type="binding site" evidence="1">
    <location>
        <position position="69"/>
    </location>
    <ligand>
        <name>5-phospho-alpha-D-ribose 1-diphosphate</name>
        <dbReference type="ChEBI" id="CHEBI:58017"/>
    </ligand>
</feature>
<feature type="binding site" evidence="1">
    <location>
        <position position="69"/>
    </location>
    <ligand>
        <name>GMP</name>
        <dbReference type="ChEBI" id="CHEBI:58115"/>
    </ligand>
</feature>
<feature type="binding site" evidence="1">
    <location>
        <begin position="88"/>
        <end position="96"/>
    </location>
    <ligand>
        <name>5-phospho-alpha-D-ribose 1-diphosphate</name>
        <dbReference type="ChEBI" id="CHEBI:58017"/>
    </ligand>
</feature>
<feature type="binding site" evidence="1">
    <location>
        <position position="89"/>
    </location>
    <ligand>
        <name>Mg(2+)</name>
        <dbReference type="ChEBI" id="CHEBI:18420"/>
    </ligand>
</feature>
<feature type="binding site" evidence="1">
    <location>
        <begin position="92"/>
        <end position="96"/>
    </location>
    <ligand>
        <name>GMP</name>
        <dbReference type="ChEBI" id="CHEBI:58115"/>
    </ligand>
</feature>
<feature type="binding site" evidence="1">
    <location>
        <position position="92"/>
    </location>
    <ligand>
        <name>guanine</name>
        <dbReference type="ChEBI" id="CHEBI:16235"/>
    </ligand>
</feature>
<feature type="binding site" evidence="1">
    <location>
        <position position="92"/>
    </location>
    <ligand>
        <name>xanthine</name>
        <dbReference type="ChEBI" id="CHEBI:17712"/>
    </ligand>
</feature>
<feature type="binding site" evidence="1">
    <location>
        <begin position="134"/>
        <end position="135"/>
    </location>
    <ligand>
        <name>GMP</name>
        <dbReference type="ChEBI" id="CHEBI:58115"/>
    </ligand>
</feature>
<feature type="binding site" evidence="1">
    <location>
        <position position="135"/>
    </location>
    <ligand>
        <name>guanine</name>
        <dbReference type="ChEBI" id="CHEBI:16235"/>
    </ligand>
</feature>
<feature type="binding site" evidence="1">
    <location>
        <position position="135"/>
    </location>
    <ligand>
        <name>xanthine</name>
        <dbReference type="ChEBI" id="CHEBI:17712"/>
    </ligand>
</feature>
<name>XGPT_YERPY</name>
<organism>
    <name type="scientific">Yersinia pseudotuberculosis serotype O:3 (strain YPIII)</name>
    <dbReference type="NCBI Taxonomy" id="502800"/>
    <lineage>
        <taxon>Bacteria</taxon>
        <taxon>Pseudomonadati</taxon>
        <taxon>Pseudomonadota</taxon>
        <taxon>Gammaproteobacteria</taxon>
        <taxon>Enterobacterales</taxon>
        <taxon>Yersiniaceae</taxon>
        <taxon>Yersinia</taxon>
    </lineage>
</organism>
<accession>B1JIH6</accession>
<reference key="1">
    <citation type="submission" date="2008-02" db="EMBL/GenBank/DDBJ databases">
        <title>Complete sequence of Yersinia pseudotuberculosis YPIII.</title>
        <authorList>
            <consortium name="US DOE Joint Genome Institute"/>
            <person name="Copeland A."/>
            <person name="Lucas S."/>
            <person name="Lapidus A."/>
            <person name="Glavina del Rio T."/>
            <person name="Dalin E."/>
            <person name="Tice H."/>
            <person name="Bruce D."/>
            <person name="Goodwin L."/>
            <person name="Pitluck S."/>
            <person name="Munk A.C."/>
            <person name="Brettin T."/>
            <person name="Detter J.C."/>
            <person name="Han C."/>
            <person name="Tapia R."/>
            <person name="Schmutz J."/>
            <person name="Larimer F."/>
            <person name="Land M."/>
            <person name="Hauser L."/>
            <person name="Challacombe J.F."/>
            <person name="Green L."/>
            <person name="Lindler L.E."/>
            <person name="Nikolich M.P."/>
            <person name="Richardson P."/>
        </authorList>
    </citation>
    <scope>NUCLEOTIDE SEQUENCE [LARGE SCALE GENOMIC DNA]</scope>
    <source>
        <strain>YPIII</strain>
    </source>
</reference>
<keyword id="KW-0997">Cell inner membrane</keyword>
<keyword id="KW-1003">Cell membrane</keyword>
<keyword id="KW-0328">Glycosyltransferase</keyword>
<keyword id="KW-0460">Magnesium</keyword>
<keyword id="KW-0472">Membrane</keyword>
<keyword id="KW-0479">Metal-binding</keyword>
<keyword id="KW-0660">Purine salvage</keyword>
<keyword id="KW-0808">Transferase</keyword>
<protein>
    <recommendedName>
        <fullName evidence="1">Xanthine-guanine phosphoribosyltransferase</fullName>
        <shortName evidence="1">XGPRT</shortName>
        <ecNumber evidence="1">2.4.2.-</ecNumber>
        <ecNumber evidence="1">2.4.2.22</ecNumber>
    </recommendedName>
    <alternativeName>
        <fullName evidence="1">Xanthine phosphoribosyltransferase</fullName>
    </alternativeName>
</protein>
<proteinExistence type="inferred from homology"/>
<gene>
    <name evidence="1" type="primary">gpt</name>
    <name type="ordered locus">YPK_3291</name>
</gene>
<dbReference type="EC" id="2.4.2.-" evidence="1"/>
<dbReference type="EC" id="2.4.2.22" evidence="1"/>
<dbReference type="EMBL" id="CP000950">
    <property type="protein sequence ID" value="ACA69560.1"/>
    <property type="molecule type" value="Genomic_DNA"/>
</dbReference>
<dbReference type="RefSeq" id="WP_002208704.1">
    <property type="nucleotide sequence ID" value="NZ_CP009792.1"/>
</dbReference>
<dbReference type="SMR" id="B1JIH6"/>
<dbReference type="GeneID" id="57975493"/>
<dbReference type="KEGG" id="ypy:YPK_3291"/>
<dbReference type="PATRIC" id="fig|502800.11.peg.4024"/>
<dbReference type="UniPathway" id="UPA00602">
    <property type="reaction ID" value="UER00658"/>
</dbReference>
<dbReference type="UniPathway" id="UPA00909">
    <property type="reaction ID" value="UER00887"/>
</dbReference>
<dbReference type="GO" id="GO:0005829">
    <property type="term" value="C:cytosol"/>
    <property type="evidence" value="ECO:0007669"/>
    <property type="project" value="TreeGrafter"/>
</dbReference>
<dbReference type="GO" id="GO:0005886">
    <property type="term" value="C:plasma membrane"/>
    <property type="evidence" value="ECO:0007669"/>
    <property type="project" value="UniProtKB-SubCell"/>
</dbReference>
<dbReference type="GO" id="GO:0052657">
    <property type="term" value="F:guanine phosphoribosyltransferase activity"/>
    <property type="evidence" value="ECO:0007669"/>
    <property type="project" value="RHEA"/>
</dbReference>
<dbReference type="GO" id="GO:0004422">
    <property type="term" value="F:hypoxanthine phosphoribosyltransferase activity"/>
    <property type="evidence" value="ECO:0007669"/>
    <property type="project" value="TreeGrafter"/>
</dbReference>
<dbReference type="GO" id="GO:0000287">
    <property type="term" value="F:magnesium ion binding"/>
    <property type="evidence" value="ECO:0007669"/>
    <property type="project" value="UniProtKB-UniRule"/>
</dbReference>
<dbReference type="GO" id="GO:0000310">
    <property type="term" value="F:xanthine phosphoribosyltransferase activity"/>
    <property type="evidence" value="ECO:0007669"/>
    <property type="project" value="UniProtKB-UniRule"/>
</dbReference>
<dbReference type="GO" id="GO:0032263">
    <property type="term" value="P:GMP salvage"/>
    <property type="evidence" value="ECO:0007669"/>
    <property type="project" value="UniProtKB-UniRule"/>
</dbReference>
<dbReference type="GO" id="GO:0032264">
    <property type="term" value="P:IMP salvage"/>
    <property type="evidence" value="ECO:0007669"/>
    <property type="project" value="TreeGrafter"/>
</dbReference>
<dbReference type="GO" id="GO:0006166">
    <property type="term" value="P:purine ribonucleoside salvage"/>
    <property type="evidence" value="ECO:0007669"/>
    <property type="project" value="UniProtKB-KW"/>
</dbReference>
<dbReference type="GO" id="GO:0032265">
    <property type="term" value="P:XMP salvage"/>
    <property type="evidence" value="ECO:0007669"/>
    <property type="project" value="UniProtKB-UniRule"/>
</dbReference>
<dbReference type="CDD" id="cd06223">
    <property type="entry name" value="PRTases_typeI"/>
    <property type="match status" value="1"/>
</dbReference>
<dbReference type="FunFam" id="3.40.50.2020:FF:000009">
    <property type="entry name" value="Xanthine phosphoribosyltransferase"/>
    <property type="match status" value="1"/>
</dbReference>
<dbReference type="Gene3D" id="3.40.50.2020">
    <property type="match status" value="1"/>
</dbReference>
<dbReference type="HAMAP" id="MF_01903">
    <property type="entry name" value="XGPRT"/>
    <property type="match status" value="1"/>
</dbReference>
<dbReference type="InterPro" id="IPR000836">
    <property type="entry name" value="PRibTrfase_dom"/>
</dbReference>
<dbReference type="InterPro" id="IPR029057">
    <property type="entry name" value="PRTase-like"/>
</dbReference>
<dbReference type="InterPro" id="IPR023747">
    <property type="entry name" value="Xanthine_Guanine_PRibTrfase"/>
</dbReference>
<dbReference type="NCBIfam" id="NF006613">
    <property type="entry name" value="PRK09177.1"/>
    <property type="match status" value="1"/>
</dbReference>
<dbReference type="PANTHER" id="PTHR39563">
    <property type="entry name" value="XANTHINE PHOSPHORIBOSYLTRANSFERASE"/>
    <property type="match status" value="1"/>
</dbReference>
<dbReference type="PANTHER" id="PTHR39563:SF1">
    <property type="entry name" value="XANTHINE-GUANINE PHOSPHORIBOSYLTRANSFERASE"/>
    <property type="match status" value="1"/>
</dbReference>
<dbReference type="Pfam" id="PF00156">
    <property type="entry name" value="Pribosyltran"/>
    <property type="match status" value="1"/>
</dbReference>
<dbReference type="SUPFAM" id="SSF53271">
    <property type="entry name" value="PRTase-like"/>
    <property type="match status" value="1"/>
</dbReference>
<dbReference type="PROSITE" id="PS00103">
    <property type="entry name" value="PUR_PYR_PR_TRANSFER"/>
    <property type="match status" value="1"/>
</dbReference>
<sequence length="152" mass="16966">MNEKYVVTWDMLQIHARKLAQRLLPAEQWKGIIAVSRGGLVPAGILARELGIRYVDTVCISSYDHDNQRDLKVLKRAEGDGEGFIVIDDLVDTGGTATAIREMYPKAHFVTIFAKPAGRPLVDDYVVDIPQNTWIEQPWDMAVTFVAPLSGK</sequence>
<comment type="function">
    <text evidence="1">Purine salvage pathway enzyme that catalyzes the transfer of the ribosyl-5-phosphate group from 5-phospho-alpha-D-ribose 1-diphosphate (PRPP) to the N9 position of the 6-oxopurines guanine and xanthine to form the corresponding ribonucleotides GMP (guanosine 5'-monophosphate) and XMP (xanthosine 5'-monophosphate), with the release of PPi. To a lesser extent, also acts on hypoxanthine.</text>
</comment>
<comment type="catalytic activity">
    <reaction evidence="1">
        <text>GMP + diphosphate = guanine + 5-phospho-alpha-D-ribose 1-diphosphate</text>
        <dbReference type="Rhea" id="RHEA:25424"/>
        <dbReference type="ChEBI" id="CHEBI:16235"/>
        <dbReference type="ChEBI" id="CHEBI:33019"/>
        <dbReference type="ChEBI" id="CHEBI:58017"/>
        <dbReference type="ChEBI" id="CHEBI:58115"/>
    </reaction>
    <physiologicalReaction direction="right-to-left" evidence="1">
        <dbReference type="Rhea" id="RHEA:25426"/>
    </physiologicalReaction>
</comment>
<comment type="catalytic activity">
    <reaction evidence="1">
        <text>XMP + diphosphate = xanthine + 5-phospho-alpha-D-ribose 1-diphosphate</text>
        <dbReference type="Rhea" id="RHEA:10800"/>
        <dbReference type="ChEBI" id="CHEBI:17712"/>
        <dbReference type="ChEBI" id="CHEBI:33019"/>
        <dbReference type="ChEBI" id="CHEBI:57464"/>
        <dbReference type="ChEBI" id="CHEBI:58017"/>
        <dbReference type="EC" id="2.4.2.22"/>
    </reaction>
    <physiologicalReaction direction="right-to-left" evidence="1">
        <dbReference type="Rhea" id="RHEA:10802"/>
    </physiologicalReaction>
</comment>
<comment type="catalytic activity">
    <reaction evidence="1">
        <text>IMP + diphosphate = hypoxanthine + 5-phospho-alpha-D-ribose 1-diphosphate</text>
        <dbReference type="Rhea" id="RHEA:17973"/>
        <dbReference type="ChEBI" id="CHEBI:17368"/>
        <dbReference type="ChEBI" id="CHEBI:33019"/>
        <dbReference type="ChEBI" id="CHEBI:58017"/>
        <dbReference type="ChEBI" id="CHEBI:58053"/>
    </reaction>
    <physiologicalReaction direction="right-to-left" evidence="1">
        <dbReference type="Rhea" id="RHEA:17975"/>
    </physiologicalReaction>
</comment>
<comment type="cofactor">
    <cofactor evidence="1">
        <name>Mg(2+)</name>
        <dbReference type="ChEBI" id="CHEBI:18420"/>
    </cofactor>
</comment>
<comment type="pathway">
    <text evidence="1">Purine metabolism; GMP biosynthesis via salvage pathway; GMP from guanine: step 1/1.</text>
</comment>
<comment type="pathway">
    <text evidence="1">Purine metabolism; XMP biosynthesis via salvage pathway; XMP from xanthine: step 1/1.</text>
</comment>
<comment type="subunit">
    <text evidence="1">Homotetramer.</text>
</comment>
<comment type="subcellular location">
    <subcellularLocation>
        <location evidence="1">Cell inner membrane</location>
        <topology evidence="1">Peripheral membrane protein</topology>
    </subcellularLocation>
</comment>
<comment type="similarity">
    <text evidence="1">Belongs to the purine/pyrimidine phosphoribosyltransferase family. XGPT subfamily.</text>
</comment>